<gene>
    <name evidence="1" type="primary">rnc</name>
    <name type="ordered locus">SPP_1285</name>
</gene>
<organism>
    <name type="scientific">Streptococcus pneumoniae (strain P1031)</name>
    <dbReference type="NCBI Taxonomy" id="488223"/>
    <lineage>
        <taxon>Bacteria</taxon>
        <taxon>Bacillati</taxon>
        <taxon>Bacillota</taxon>
        <taxon>Bacilli</taxon>
        <taxon>Lactobacillales</taxon>
        <taxon>Streptococcaceae</taxon>
        <taxon>Streptococcus</taxon>
    </lineage>
</organism>
<reference key="1">
    <citation type="journal article" date="2010" name="Genome Biol.">
        <title>Structure and dynamics of the pan-genome of Streptococcus pneumoniae and closely related species.</title>
        <authorList>
            <person name="Donati C."/>
            <person name="Hiller N.L."/>
            <person name="Tettelin H."/>
            <person name="Muzzi A."/>
            <person name="Croucher N.J."/>
            <person name="Angiuoli S.V."/>
            <person name="Oggioni M."/>
            <person name="Dunning Hotopp J.C."/>
            <person name="Hu F.Z."/>
            <person name="Riley D.R."/>
            <person name="Covacci A."/>
            <person name="Mitchell T.J."/>
            <person name="Bentley S.D."/>
            <person name="Kilian M."/>
            <person name="Ehrlich G.D."/>
            <person name="Rappuoli R."/>
            <person name="Moxon E.R."/>
            <person name="Masignani V."/>
        </authorList>
    </citation>
    <scope>NUCLEOTIDE SEQUENCE [LARGE SCALE GENOMIC DNA]</scope>
    <source>
        <strain>P1031</strain>
    </source>
</reference>
<keyword id="KW-0963">Cytoplasm</keyword>
<keyword id="KW-0255">Endonuclease</keyword>
<keyword id="KW-0378">Hydrolase</keyword>
<keyword id="KW-0460">Magnesium</keyword>
<keyword id="KW-0479">Metal-binding</keyword>
<keyword id="KW-0507">mRNA processing</keyword>
<keyword id="KW-0540">Nuclease</keyword>
<keyword id="KW-0694">RNA-binding</keyword>
<keyword id="KW-0698">rRNA processing</keyword>
<keyword id="KW-0699">rRNA-binding</keyword>
<keyword id="KW-0819">tRNA processing</keyword>
<accession>C1CKY7</accession>
<proteinExistence type="inferred from homology"/>
<feature type="chain" id="PRO_1000118938" description="Ribonuclease 3">
    <location>
        <begin position="1"/>
        <end position="232"/>
    </location>
</feature>
<feature type="domain" description="RNase III" evidence="1">
    <location>
        <begin position="5"/>
        <end position="134"/>
    </location>
</feature>
<feature type="domain" description="DRBM" evidence="1">
    <location>
        <begin position="160"/>
        <end position="229"/>
    </location>
</feature>
<feature type="active site" evidence="1">
    <location>
        <position position="51"/>
    </location>
</feature>
<feature type="active site" evidence="1">
    <location>
        <position position="123"/>
    </location>
</feature>
<feature type="binding site" evidence="1">
    <location>
        <position position="47"/>
    </location>
    <ligand>
        <name>Mg(2+)</name>
        <dbReference type="ChEBI" id="CHEBI:18420"/>
    </ligand>
</feature>
<feature type="binding site" evidence="1">
    <location>
        <position position="120"/>
    </location>
    <ligand>
        <name>Mg(2+)</name>
        <dbReference type="ChEBI" id="CHEBI:18420"/>
    </ligand>
</feature>
<feature type="binding site" evidence="1">
    <location>
        <position position="123"/>
    </location>
    <ligand>
        <name>Mg(2+)</name>
        <dbReference type="ChEBI" id="CHEBI:18420"/>
    </ligand>
</feature>
<sequence>MKELQTVLKNHFAIEFADKNLLETAFTHTSYANEHRLLKISHNERLEFLGDAVLQLLISEYLYKKYPKKPEGDLSKLRAMIVREESLAGFARDCQFNQFIKLGKGEEKSGGRNRDTILGDAFEAFLGALLLDKDVAKVKEFIYQVIIPKVEAGEFEMITDYKTHLQELLQVNGDVAIRYQVISETGPAHDKVFDVEVLVEGKSIGQGQGRSKKLAEQEAAKNAVEKGLDSCI</sequence>
<name>RNC_STRZP</name>
<protein>
    <recommendedName>
        <fullName evidence="1">Ribonuclease 3</fullName>
        <ecNumber evidence="1">3.1.26.3</ecNumber>
    </recommendedName>
    <alternativeName>
        <fullName evidence="1">Ribonuclease III</fullName>
        <shortName evidence="1">RNase III</shortName>
    </alternativeName>
</protein>
<dbReference type="EC" id="3.1.26.3" evidence="1"/>
<dbReference type="EMBL" id="CP000920">
    <property type="protein sequence ID" value="ACO20348.1"/>
    <property type="molecule type" value="Genomic_DNA"/>
</dbReference>
<dbReference type="RefSeq" id="WP_000661496.1">
    <property type="nucleotide sequence ID" value="NC_012467.1"/>
</dbReference>
<dbReference type="SMR" id="C1CKY7"/>
<dbReference type="GeneID" id="45653462"/>
<dbReference type="KEGG" id="spp:SPP_1285"/>
<dbReference type="HOGENOM" id="CLU_000907_1_3_9"/>
<dbReference type="GO" id="GO:0005737">
    <property type="term" value="C:cytoplasm"/>
    <property type="evidence" value="ECO:0007669"/>
    <property type="project" value="UniProtKB-SubCell"/>
</dbReference>
<dbReference type="GO" id="GO:0003725">
    <property type="term" value="F:double-stranded RNA binding"/>
    <property type="evidence" value="ECO:0007669"/>
    <property type="project" value="TreeGrafter"/>
</dbReference>
<dbReference type="GO" id="GO:0046872">
    <property type="term" value="F:metal ion binding"/>
    <property type="evidence" value="ECO:0007669"/>
    <property type="project" value="UniProtKB-KW"/>
</dbReference>
<dbReference type="GO" id="GO:0004525">
    <property type="term" value="F:ribonuclease III activity"/>
    <property type="evidence" value="ECO:0007669"/>
    <property type="project" value="UniProtKB-UniRule"/>
</dbReference>
<dbReference type="GO" id="GO:0019843">
    <property type="term" value="F:rRNA binding"/>
    <property type="evidence" value="ECO:0007669"/>
    <property type="project" value="UniProtKB-KW"/>
</dbReference>
<dbReference type="GO" id="GO:0006397">
    <property type="term" value="P:mRNA processing"/>
    <property type="evidence" value="ECO:0007669"/>
    <property type="project" value="UniProtKB-UniRule"/>
</dbReference>
<dbReference type="GO" id="GO:0010468">
    <property type="term" value="P:regulation of gene expression"/>
    <property type="evidence" value="ECO:0007669"/>
    <property type="project" value="TreeGrafter"/>
</dbReference>
<dbReference type="GO" id="GO:0006364">
    <property type="term" value="P:rRNA processing"/>
    <property type="evidence" value="ECO:0007669"/>
    <property type="project" value="UniProtKB-UniRule"/>
</dbReference>
<dbReference type="GO" id="GO:0008033">
    <property type="term" value="P:tRNA processing"/>
    <property type="evidence" value="ECO:0007669"/>
    <property type="project" value="UniProtKB-KW"/>
</dbReference>
<dbReference type="CDD" id="cd10845">
    <property type="entry name" value="DSRM_RNAse_III_family"/>
    <property type="match status" value="1"/>
</dbReference>
<dbReference type="CDD" id="cd00593">
    <property type="entry name" value="RIBOc"/>
    <property type="match status" value="1"/>
</dbReference>
<dbReference type="FunFam" id="1.10.1520.10:FF:000001">
    <property type="entry name" value="Ribonuclease 3"/>
    <property type="match status" value="1"/>
</dbReference>
<dbReference type="FunFam" id="3.30.160.20:FF:000003">
    <property type="entry name" value="Ribonuclease 3"/>
    <property type="match status" value="1"/>
</dbReference>
<dbReference type="Gene3D" id="3.30.160.20">
    <property type="match status" value="1"/>
</dbReference>
<dbReference type="Gene3D" id="1.10.1520.10">
    <property type="entry name" value="Ribonuclease III domain"/>
    <property type="match status" value="1"/>
</dbReference>
<dbReference type="HAMAP" id="MF_00104">
    <property type="entry name" value="RNase_III"/>
    <property type="match status" value="1"/>
</dbReference>
<dbReference type="InterPro" id="IPR014720">
    <property type="entry name" value="dsRBD_dom"/>
</dbReference>
<dbReference type="InterPro" id="IPR011907">
    <property type="entry name" value="RNase_III"/>
</dbReference>
<dbReference type="InterPro" id="IPR000999">
    <property type="entry name" value="RNase_III_dom"/>
</dbReference>
<dbReference type="InterPro" id="IPR036389">
    <property type="entry name" value="RNase_III_sf"/>
</dbReference>
<dbReference type="NCBIfam" id="TIGR02191">
    <property type="entry name" value="RNaseIII"/>
    <property type="match status" value="1"/>
</dbReference>
<dbReference type="PANTHER" id="PTHR11207:SF0">
    <property type="entry name" value="RIBONUCLEASE 3"/>
    <property type="match status" value="1"/>
</dbReference>
<dbReference type="PANTHER" id="PTHR11207">
    <property type="entry name" value="RIBONUCLEASE III"/>
    <property type="match status" value="1"/>
</dbReference>
<dbReference type="Pfam" id="PF00035">
    <property type="entry name" value="dsrm"/>
    <property type="match status" value="1"/>
</dbReference>
<dbReference type="Pfam" id="PF14622">
    <property type="entry name" value="Ribonucleas_3_3"/>
    <property type="match status" value="1"/>
</dbReference>
<dbReference type="SMART" id="SM00358">
    <property type="entry name" value="DSRM"/>
    <property type="match status" value="1"/>
</dbReference>
<dbReference type="SMART" id="SM00535">
    <property type="entry name" value="RIBOc"/>
    <property type="match status" value="1"/>
</dbReference>
<dbReference type="SUPFAM" id="SSF54768">
    <property type="entry name" value="dsRNA-binding domain-like"/>
    <property type="match status" value="1"/>
</dbReference>
<dbReference type="SUPFAM" id="SSF69065">
    <property type="entry name" value="RNase III domain-like"/>
    <property type="match status" value="1"/>
</dbReference>
<dbReference type="PROSITE" id="PS50137">
    <property type="entry name" value="DS_RBD"/>
    <property type="match status" value="1"/>
</dbReference>
<dbReference type="PROSITE" id="PS00517">
    <property type="entry name" value="RNASE_3_1"/>
    <property type="match status" value="1"/>
</dbReference>
<dbReference type="PROSITE" id="PS50142">
    <property type="entry name" value="RNASE_3_2"/>
    <property type="match status" value="1"/>
</dbReference>
<comment type="function">
    <text evidence="1">Digests double-stranded RNA. Involved in the processing of primary rRNA transcript to yield the immediate precursors to the large and small rRNAs (23S and 16S). Processes some mRNAs, and tRNAs when they are encoded in the rRNA operon. Processes pre-crRNA and tracrRNA of type II CRISPR loci if present in the organism.</text>
</comment>
<comment type="catalytic activity">
    <reaction evidence="1">
        <text>Endonucleolytic cleavage to 5'-phosphomonoester.</text>
        <dbReference type="EC" id="3.1.26.3"/>
    </reaction>
</comment>
<comment type="cofactor">
    <cofactor evidence="1">
        <name>Mg(2+)</name>
        <dbReference type="ChEBI" id="CHEBI:18420"/>
    </cofactor>
</comment>
<comment type="subunit">
    <text evidence="1">Homodimer.</text>
</comment>
<comment type="subcellular location">
    <subcellularLocation>
        <location evidence="1">Cytoplasm</location>
    </subcellularLocation>
</comment>
<comment type="similarity">
    <text evidence="1">Belongs to the ribonuclease III family.</text>
</comment>
<evidence type="ECO:0000255" key="1">
    <source>
        <dbReference type="HAMAP-Rule" id="MF_00104"/>
    </source>
</evidence>